<accession>O60613</accession>
<accession>A0A0B4J1S4</accession>
<accession>Q4GZG7</accession>
<accession>Q8WU00</accession>
<accession>Q9BS64</accession>
<accession>Q9GZW0</accession>
<accession>Q9NR01</accession>
<evidence type="ECO:0000250" key="1">
    <source>
        <dbReference type="UniProtKB" id="Q923V8"/>
    </source>
</evidence>
<evidence type="ECO:0000255" key="2"/>
<evidence type="ECO:0000269" key="3">
    <source>
    </source>
</evidence>
<evidence type="ECO:0000269" key="4">
    <source>
    </source>
</evidence>
<evidence type="ECO:0000269" key="5">
    <source>
    </source>
</evidence>
<evidence type="ECO:0000269" key="6">
    <source>
    </source>
</evidence>
<evidence type="ECO:0000303" key="7">
    <source>
    </source>
</evidence>
<evidence type="ECO:0000303" key="8">
    <source>
    </source>
</evidence>
<evidence type="ECO:0000303" key="9">
    <source>
    </source>
</evidence>
<evidence type="ECO:0000303" key="10">
    <source>
    </source>
</evidence>
<evidence type="ECO:0000305" key="11"/>
<evidence type="ECO:0000312" key="12">
    <source>
        <dbReference type="HGNC" id="HGNC:17705"/>
    </source>
</evidence>
<protein>
    <recommendedName>
        <fullName evidence="9">Selenoprotein F</fullName>
    </recommendedName>
    <alternativeName>
        <fullName evidence="10">15 kDa selenoprotein</fullName>
    </alternativeName>
</protein>
<comment type="function">
    <text evidence="1 4">May be involved in redox reactions associated with the formation of disulfide bonds (By similarity). May contribute to the quality control of protein folding in the endoplasmic reticulum (PubMed:24415556). May regulate protein folding by enhancing the catalytic activity of UGGT1/UGCGL1 and UGGT2/UGCGL2 (PubMed:24415556).</text>
</comment>
<comment type="subunit">
    <text evidence="4 5">Forms a tight complex with UGGT1/UGCGL1 (PubMed:24415556). Interacts with UGGT2/UGCGL2 (PubMed:24415556). Interacts with RDH11 (PubMed:29410696).</text>
</comment>
<comment type="interaction">
    <interactant intactId="EBI-1052797">
        <id>O60613</id>
    </interactant>
    <interactant intactId="EBI-2823756">
        <id>Q8TC12</id>
        <label>RDH11</label>
    </interactant>
    <organismsDiffer>false</organismsDiffer>
    <experiments>5</experiments>
</comment>
<comment type="subcellular location">
    <subcellularLocation>
        <location evidence="3">Endoplasmic reticulum lumen</location>
    </subcellularLocation>
    <text>The association with UGGT1/UGCGL1 is essential for its retention in the endoplasmic reticulum.</text>
</comment>
<comment type="alternative products">
    <event type="alternative splicing"/>
    <isoform>
        <id>O60613-1</id>
        <name>1</name>
        <sequence type="displayed"/>
    </isoform>
    <isoform>
        <id>O60613-2</id>
        <name>2</name>
        <sequence type="described" ref="VSP_014695 VSP_014696"/>
    </isoform>
</comment>
<comment type="tissue specificity">
    <text evidence="6">Higher levels in prostate and thyroid gland.</text>
</comment>
<comment type="PTM">
    <text>The N-terminus is blocked.</text>
</comment>
<comment type="mass spectrometry" mass="14870.0" method="Electrospray" evidence="6"/>
<comment type="mass spectrometry" mass="14830.0" method="MALDI" evidence="6"/>
<comment type="similarity">
    <text evidence="11">Belongs to the selenoprotein M/F family.</text>
</comment>
<comment type="caution">
    <text evidence="11">It is uncertain whether Met-1 or Met-4 is the initiator.</text>
</comment>
<comment type="sequence caution" evidence="11">
    <conflict type="erroneous initiation">
        <sequence resource="EMBL-CDS" id="AAC15478"/>
    </conflict>
    <text>Truncated N-terminus.</text>
</comment>
<comment type="sequence caution" evidence="11">
    <conflict type="erroneous initiation">
        <sequence resource="EMBL-CDS" id="AAF78966"/>
    </conflict>
    <text>Truncated N-terminus.</text>
</comment>
<comment type="sequence caution" evidence="11">
    <conflict type="erroneous initiation">
        <sequence resource="EMBL-CDS" id="AAG31556"/>
    </conflict>
    <text>Truncated N-terminus.</text>
</comment>
<comment type="sequence caution" evidence="11">
    <conflict type="erroneous initiation">
        <sequence resource="EMBL-CDS" id="AAG31557"/>
    </conflict>
    <text>Truncated N-terminus.</text>
</comment>
<comment type="sequence caution" evidence="11">
    <conflict type="erroneous initiation">
        <sequence resource="EMBL-CDS" id="CAJ18323"/>
    </conflict>
    <text>Truncated N-terminus.</text>
</comment>
<comment type="online information" name="Atlas of Genetics and Cytogenetics in Oncology and Haematology">
    <link uri="https://atlasgeneticsoncology.org/gene/42260/SEP15"/>
</comment>
<name>SEP15_HUMAN</name>
<feature type="signal peptide" evidence="2">
    <location>
        <begin position="1"/>
        <end position="31"/>
    </location>
</feature>
<feature type="chain" id="PRO_0000022307" description="Selenoprotein F">
    <location>
        <begin position="32"/>
        <end position="165"/>
    </location>
</feature>
<feature type="non-standard amino acid" description="Selenocysteine">
    <location>
        <position position="96"/>
    </location>
</feature>
<feature type="splice variant" id="VSP_014695" description="In isoform 2." evidence="8">
    <original>AFVRSDKPKLFRGLQIKYV</original>
    <variation>VCPWFRPCIKAFGRQWEHC</variation>
    <location>
        <begin position="106"/>
        <end position="124"/>
    </location>
</feature>
<feature type="splice variant" id="VSP_014696" description="In isoform 2." evidence="8">
    <location>
        <begin position="125"/>
        <end position="165"/>
    </location>
</feature>
<feature type="mutagenesis site" description="Does not affect protein folding and binding to UGGT1 or UGGT2." evidence="4">
    <original>U</original>
    <variation>C</variation>
    <location>
        <position position="96"/>
    </location>
</feature>
<keyword id="KW-0025">Alternative splicing</keyword>
<keyword id="KW-0903">Direct protein sequencing</keyword>
<keyword id="KW-0256">Endoplasmic reticulum</keyword>
<keyword id="KW-1267">Proteomics identification</keyword>
<keyword id="KW-1185">Reference proteome</keyword>
<keyword id="KW-0712">Selenocysteine</keyword>
<keyword id="KW-0732">Signal</keyword>
<dbReference type="EMBL" id="AF288991">
    <property type="protein sequence ID" value="AAG31556.1"/>
    <property type="status" value="ALT_INIT"/>
    <property type="molecule type" value="mRNA"/>
</dbReference>
<dbReference type="EMBL" id="AF288992">
    <property type="protein sequence ID" value="AAG31557.1"/>
    <property type="status" value="ALT_INIT"/>
    <property type="molecule type" value="Genomic_DNA"/>
</dbReference>
<dbReference type="EMBL" id="AF267982">
    <property type="protein sequence ID" value="AAF78966.1"/>
    <property type="status" value="ALT_INIT"/>
    <property type="molecule type" value="Genomic_DNA"/>
</dbReference>
<dbReference type="EMBL" id="AL833575">
    <property type="protein sequence ID" value="CAJ18323.1"/>
    <property type="status" value="ALT_INIT"/>
    <property type="molecule type" value="mRNA"/>
</dbReference>
<dbReference type="EMBL" id="AL121989">
    <property type="status" value="NOT_ANNOTATED_CDS"/>
    <property type="molecule type" value="Genomic_DNA"/>
</dbReference>
<dbReference type="EMBL" id="BC005294">
    <property type="protein sequence ID" value="AAH05294.3"/>
    <property type="molecule type" value="mRNA"/>
</dbReference>
<dbReference type="EMBL" id="BC016359">
    <property type="protein sequence ID" value="AAH16359.3"/>
    <property type="molecule type" value="mRNA"/>
</dbReference>
<dbReference type="EMBL" id="BC021697">
    <property type="protein sequence ID" value="AAH21697.3"/>
    <property type="molecule type" value="mRNA"/>
</dbReference>
<dbReference type="EMBL" id="AF051894">
    <property type="protein sequence ID" value="AAC15478.1"/>
    <property type="status" value="ALT_INIT"/>
    <property type="molecule type" value="mRNA"/>
</dbReference>
<dbReference type="CCDS" id="CCDS76177.1">
    <molecule id="O60613-2"/>
</dbReference>
<dbReference type="CCDS" id="CCDS76178.1">
    <molecule id="O60613-1"/>
</dbReference>
<dbReference type="RefSeq" id="NP_004252.2">
    <molecule id="O60613-1"/>
    <property type="nucleotide sequence ID" value="NM_004261.4"/>
</dbReference>
<dbReference type="RefSeq" id="NP_976086.1">
    <molecule id="O60613-2"/>
    <property type="nucleotide sequence ID" value="NM_203341.3"/>
</dbReference>
<dbReference type="BioGRID" id="114800">
    <property type="interactions" value="78"/>
</dbReference>
<dbReference type="FunCoup" id="O60613">
    <property type="interactions" value="1239"/>
</dbReference>
<dbReference type="IntAct" id="O60613">
    <property type="interactions" value="36"/>
</dbReference>
<dbReference type="MINT" id="O60613"/>
<dbReference type="STRING" id="9606.ENSP00000328729"/>
<dbReference type="GlyGen" id="O60613">
    <property type="glycosylation" value="1 site, 1 O-linked glycan (1 site)"/>
</dbReference>
<dbReference type="iPTMnet" id="O60613"/>
<dbReference type="PhosphoSitePlus" id="O60613"/>
<dbReference type="SwissPalm" id="O60613"/>
<dbReference type="BioMuta" id="SELENOF"/>
<dbReference type="jPOST" id="O60613"/>
<dbReference type="MassIVE" id="O60613"/>
<dbReference type="PaxDb" id="9606-ENSP00000328729"/>
<dbReference type="PeptideAtlas" id="O60613"/>
<dbReference type="ProteomicsDB" id="49486">
    <molecule id="O60613-1"/>
</dbReference>
<dbReference type="ProteomicsDB" id="49487">
    <molecule id="O60613-2"/>
</dbReference>
<dbReference type="Pumba" id="O60613"/>
<dbReference type="Antibodypedia" id="46916">
    <property type="antibodies" value="33 antibodies from 11 providers"/>
</dbReference>
<dbReference type="DNASU" id="9403"/>
<dbReference type="Ensembl" id="ENST00000331835.10">
    <molecule id="O60613-1"/>
    <property type="protein sequence ID" value="ENSP00000328729.6"/>
    <property type="gene ID" value="ENSG00000183291.18"/>
</dbReference>
<dbReference type="Ensembl" id="ENST00000370554.5">
    <molecule id="O60613-2"/>
    <property type="protein sequence ID" value="ENSP00000359585.2"/>
    <property type="gene ID" value="ENSG00000183291.18"/>
</dbReference>
<dbReference type="GeneID" id="9403"/>
<dbReference type="KEGG" id="hsa:9403"/>
<dbReference type="MANE-Select" id="ENST00000331835.10">
    <property type="protein sequence ID" value="ENSP00000328729.6"/>
    <property type="RefSeq nucleotide sequence ID" value="NM_004261.5"/>
    <property type="RefSeq protein sequence ID" value="NP_004252.2"/>
</dbReference>
<dbReference type="AGR" id="HGNC:17705"/>
<dbReference type="CTD" id="9403"/>
<dbReference type="DisGeNET" id="9403"/>
<dbReference type="GeneCards" id="SELENOF"/>
<dbReference type="HGNC" id="HGNC:17705">
    <property type="gene designation" value="SELENOF"/>
</dbReference>
<dbReference type="HPA" id="ENSG00000183291">
    <property type="expression patterns" value="Low tissue specificity"/>
</dbReference>
<dbReference type="MIM" id="606254">
    <property type="type" value="gene"/>
</dbReference>
<dbReference type="neXtProt" id="NX_O60613"/>
<dbReference type="OpenTargets" id="ENSG00000183291"/>
<dbReference type="VEuPathDB" id="HostDB:ENSG00000183291"/>
<dbReference type="eggNOG" id="KOG3384">
    <property type="taxonomic scope" value="Eukaryota"/>
</dbReference>
<dbReference type="GeneTree" id="ENSGT00940000154284"/>
<dbReference type="InParanoid" id="O60613"/>
<dbReference type="OMA" id="IKPHCKQ"/>
<dbReference type="OrthoDB" id="1910009at2759"/>
<dbReference type="PAN-GO" id="O60613">
    <property type="GO annotations" value="2 GO annotations based on evolutionary models"/>
</dbReference>
<dbReference type="PhylomeDB" id="O60613"/>
<dbReference type="PathwayCommons" id="O60613"/>
<dbReference type="SignaLink" id="O60613"/>
<dbReference type="SIGNOR" id="O60613"/>
<dbReference type="BioGRID-ORCS" id="9403">
    <property type="hits" value="9 hits in 273 CRISPR screens"/>
</dbReference>
<dbReference type="ChiTaRS" id="SELENOF">
    <property type="organism name" value="human"/>
</dbReference>
<dbReference type="GeneWiki" id="SEP15"/>
<dbReference type="GenomeRNAi" id="9403"/>
<dbReference type="Pharos" id="O60613">
    <property type="development level" value="Tbio"/>
</dbReference>
<dbReference type="PRO" id="PR:O60613"/>
<dbReference type="Proteomes" id="UP000005640">
    <property type="component" value="Chromosome 1"/>
</dbReference>
<dbReference type="RNAct" id="O60613">
    <property type="molecule type" value="protein"/>
</dbReference>
<dbReference type="Bgee" id="ENSG00000183291">
    <property type="expression patterns" value="Expressed in islet of Langerhans and 209 other cell types or tissues"/>
</dbReference>
<dbReference type="ExpressionAtlas" id="O60613">
    <property type="expression patterns" value="baseline and differential"/>
</dbReference>
<dbReference type="GO" id="GO:0005788">
    <property type="term" value="C:endoplasmic reticulum lumen"/>
    <property type="evidence" value="ECO:0000314"/>
    <property type="project" value="UniProtKB"/>
</dbReference>
<dbReference type="GO" id="GO:0016491">
    <property type="term" value="F:oxidoreductase activity"/>
    <property type="evidence" value="ECO:0000318"/>
    <property type="project" value="GO_Central"/>
</dbReference>
<dbReference type="GO" id="GO:0008430">
    <property type="term" value="F:selenium binding"/>
    <property type="evidence" value="ECO:0007669"/>
    <property type="project" value="Ensembl"/>
</dbReference>
<dbReference type="GO" id="GO:0008379">
    <property type="term" value="F:thioredoxin peroxidase activity"/>
    <property type="evidence" value="ECO:0007669"/>
    <property type="project" value="Ensembl"/>
</dbReference>
<dbReference type="GO" id="GO:0051084">
    <property type="term" value="P:'de novo' post-translational protein folding"/>
    <property type="evidence" value="ECO:0000304"/>
    <property type="project" value="UniProtKB"/>
</dbReference>
<dbReference type="GO" id="GO:0035092">
    <property type="term" value="P:sperm DNA condensation"/>
    <property type="evidence" value="ECO:0007669"/>
    <property type="project" value="Ensembl"/>
</dbReference>
<dbReference type="FunFam" id="3.40.30.50:FF:000001">
    <property type="entry name" value="15 kDa selenoprotein"/>
    <property type="match status" value="1"/>
</dbReference>
<dbReference type="Gene3D" id="3.40.30.50">
    <property type="entry name" value="Sep15/SelM thioredoxin-like domain, active-site redox motif"/>
    <property type="match status" value="1"/>
</dbReference>
<dbReference type="InterPro" id="IPR038219">
    <property type="entry name" value="Sep15/SelM_sf"/>
</dbReference>
<dbReference type="InterPro" id="IPR039992">
    <property type="entry name" value="Sep15_SelM"/>
</dbReference>
<dbReference type="InterPro" id="IPR014912">
    <property type="entry name" value="Sep15_SelM_dom"/>
</dbReference>
<dbReference type="InterPro" id="IPR036249">
    <property type="entry name" value="Thioredoxin-like_sf"/>
</dbReference>
<dbReference type="PANTHER" id="PTHR13077">
    <property type="entry name" value="SELENOPROTEIN F"/>
    <property type="match status" value="1"/>
</dbReference>
<dbReference type="PANTHER" id="PTHR13077:SF6">
    <property type="entry name" value="SELENOPROTEIN F"/>
    <property type="match status" value="1"/>
</dbReference>
<dbReference type="Pfam" id="PF08806">
    <property type="entry name" value="Sep15_SelM"/>
    <property type="match status" value="1"/>
</dbReference>
<dbReference type="SUPFAM" id="SSF52833">
    <property type="entry name" value="Thioredoxin-like"/>
    <property type="match status" value="1"/>
</dbReference>
<reference key="1">
    <citation type="journal article" date="2000" name="J. Biol. Chem.">
        <title>Structure-expression relationships of the 15-kDa selenoprotein gene. Possible role of the protein in cancer etiology.</title>
        <authorList>
            <person name="Kumaraswamy E."/>
            <person name="Malykh A."/>
            <person name="Korotkov K.V."/>
            <person name="Kozyavkin S."/>
            <person name="Hu Y."/>
            <person name="Kwon S.Y."/>
            <person name="Moustafa M.E."/>
            <person name="Carlson B.A."/>
            <person name="Berry M.J."/>
            <person name="Lee B.J."/>
            <person name="Hatfield D.L."/>
            <person name="Diamond A.M."/>
            <person name="Gladyshev V.N."/>
        </authorList>
    </citation>
    <scope>NUCLEOTIDE SEQUENCE [GENOMIC DNA / MRNA] (ISOFORM 1)</scope>
</reference>
<reference key="2">
    <citation type="submission" date="2000-05" db="EMBL/GenBank/DDBJ databases">
        <title>The human 15-kDa selenoprotein gene: characterisation of the genomic structure and functional analysis of the promoter.</title>
        <authorList>
            <person name="Ryu M."/>
            <person name="Moon E."/>
        </authorList>
    </citation>
    <scope>NUCLEOTIDE SEQUENCE [GENOMIC DNA]</scope>
</reference>
<reference key="3">
    <citation type="journal article" date="2007" name="BMC Genomics">
        <title>The full-ORF clone resource of the German cDNA consortium.</title>
        <authorList>
            <person name="Bechtel S."/>
            <person name="Rosenfelder H."/>
            <person name="Duda A."/>
            <person name="Schmidt C.P."/>
            <person name="Ernst U."/>
            <person name="Wellenreuther R."/>
            <person name="Mehrle A."/>
            <person name="Schuster C."/>
            <person name="Bahr A."/>
            <person name="Bloecker H."/>
            <person name="Heubner D."/>
            <person name="Hoerlein A."/>
            <person name="Michel G."/>
            <person name="Wedler H."/>
            <person name="Koehrer K."/>
            <person name="Ottenwaelder B."/>
            <person name="Poustka A."/>
            <person name="Wiemann S."/>
            <person name="Schupp I."/>
        </authorList>
    </citation>
    <scope>NUCLEOTIDE SEQUENCE [LARGE SCALE MRNA] (ISOFORM 1)</scope>
    <source>
        <tissue>Endometrium</tissue>
    </source>
</reference>
<reference key="4">
    <citation type="journal article" date="2006" name="Nature">
        <title>The DNA sequence and biological annotation of human chromosome 1.</title>
        <authorList>
            <person name="Gregory S.G."/>
            <person name="Barlow K.F."/>
            <person name="McLay K.E."/>
            <person name="Kaul R."/>
            <person name="Swarbreck D."/>
            <person name="Dunham A."/>
            <person name="Scott C.E."/>
            <person name="Howe K.L."/>
            <person name="Woodfine K."/>
            <person name="Spencer C.C.A."/>
            <person name="Jones M.C."/>
            <person name="Gillson C."/>
            <person name="Searle S."/>
            <person name="Zhou Y."/>
            <person name="Kokocinski F."/>
            <person name="McDonald L."/>
            <person name="Evans R."/>
            <person name="Phillips K."/>
            <person name="Atkinson A."/>
            <person name="Cooper R."/>
            <person name="Jones C."/>
            <person name="Hall R.E."/>
            <person name="Andrews T.D."/>
            <person name="Lloyd C."/>
            <person name="Ainscough R."/>
            <person name="Almeida J.P."/>
            <person name="Ambrose K.D."/>
            <person name="Anderson F."/>
            <person name="Andrew R.W."/>
            <person name="Ashwell R.I.S."/>
            <person name="Aubin K."/>
            <person name="Babbage A.K."/>
            <person name="Bagguley C.L."/>
            <person name="Bailey J."/>
            <person name="Beasley H."/>
            <person name="Bethel G."/>
            <person name="Bird C.P."/>
            <person name="Bray-Allen S."/>
            <person name="Brown J.Y."/>
            <person name="Brown A.J."/>
            <person name="Buckley D."/>
            <person name="Burton J."/>
            <person name="Bye J."/>
            <person name="Carder C."/>
            <person name="Chapman J.C."/>
            <person name="Clark S.Y."/>
            <person name="Clarke G."/>
            <person name="Clee C."/>
            <person name="Cobley V."/>
            <person name="Collier R.E."/>
            <person name="Corby N."/>
            <person name="Coville G.J."/>
            <person name="Davies J."/>
            <person name="Deadman R."/>
            <person name="Dunn M."/>
            <person name="Earthrowl M."/>
            <person name="Ellington A.G."/>
            <person name="Errington H."/>
            <person name="Frankish A."/>
            <person name="Frankland J."/>
            <person name="French L."/>
            <person name="Garner P."/>
            <person name="Garnett J."/>
            <person name="Gay L."/>
            <person name="Ghori M.R.J."/>
            <person name="Gibson R."/>
            <person name="Gilby L.M."/>
            <person name="Gillett W."/>
            <person name="Glithero R.J."/>
            <person name="Grafham D.V."/>
            <person name="Griffiths C."/>
            <person name="Griffiths-Jones S."/>
            <person name="Grocock R."/>
            <person name="Hammond S."/>
            <person name="Harrison E.S.I."/>
            <person name="Hart E."/>
            <person name="Haugen E."/>
            <person name="Heath P.D."/>
            <person name="Holmes S."/>
            <person name="Holt K."/>
            <person name="Howden P.J."/>
            <person name="Hunt A.R."/>
            <person name="Hunt S.E."/>
            <person name="Hunter G."/>
            <person name="Isherwood J."/>
            <person name="James R."/>
            <person name="Johnson C."/>
            <person name="Johnson D."/>
            <person name="Joy A."/>
            <person name="Kay M."/>
            <person name="Kershaw J.K."/>
            <person name="Kibukawa M."/>
            <person name="Kimberley A.M."/>
            <person name="King A."/>
            <person name="Knights A.J."/>
            <person name="Lad H."/>
            <person name="Laird G."/>
            <person name="Lawlor S."/>
            <person name="Leongamornlert D.A."/>
            <person name="Lloyd D.M."/>
            <person name="Loveland J."/>
            <person name="Lovell J."/>
            <person name="Lush M.J."/>
            <person name="Lyne R."/>
            <person name="Martin S."/>
            <person name="Mashreghi-Mohammadi M."/>
            <person name="Matthews L."/>
            <person name="Matthews N.S.W."/>
            <person name="McLaren S."/>
            <person name="Milne S."/>
            <person name="Mistry S."/>
            <person name="Moore M.J.F."/>
            <person name="Nickerson T."/>
            <person name="O'Dell C.N."/>
            <person name="Oliver K."/>
            <person name="Palmeiri A."/>
            <person name="Palmer S.A."/>
            <person name="Parker A."/>
            <person name="Patel D."/>
            <person name="Pearce A.V."/>
            <person name="Peck A.I."/>
            <person name="Pelan S."/>
            <person name="Phelps K."/>
            <person name="Phillimore B.J."/>
            <person name="Plumb R."/>
            <person name="Rajan J."/>
            <person name="Raymond C."/>
            <person name="Rouse G."/>
            <person name="Saenphimmachak C."/>
            <person name="Sehra H.K."/>
            <person name="Sheridan E."/>
            <person name="Shownkeen R."/>
            <person name="Sims S."/>
            <person name="Skuce C.D."/>
            <person name="Smith M."/>
            <person name="Steward C."/>
            <person name="Subramanian S."/>
            <person name="Sycamore N."/>
            <person name="Tracey A."/>
            <person name="Tromans A."/>
            <person name="Van Helmond Z."/>
            <person name="Wall M."/>
            <person name="Wallis J.M."/>
            <person name="White S."/>
            <person name="Whitehead S.L."/>
            <person name="Wilkinson J.E."/>
            <person name="Willey D.L."/>
            <person name="Williams H."/>
            <person name="Wilming L."/>
            <person name="Wray P.W."/>
            <person name="Wu Z."/>
            <person name="Coulson A."/>
            <person name="Vaudin M."/>
            <person name="Sulston J.E."/>
            <person name="Durbin R.M."/>
            <person name="Hubbard T."/>
            <person name="Wooster R."/>
            <person name="Dunham I."/>
            <person name="Carter N.P."/>
            <person name="McVean G."/>
            <person name="Ross M.T."/>
            <person name="Harrow J."/>
            <person name="Olson M.V."/>
            <person name="Beck S."/>
            <person name="Rogers J."/>
            <person name="Bentley D.R."/>
        </authorList>
    </citation>
    <scope>NUCLEOTIDE SEQUENCE [LARGE SCALE GENOMIC DNA]</scope>
</reference>
<reference key="5">
    <citation type="journal article" date="2004" name="Genome Res.">
        <title>The status, quality, and expansion of the NIH full-length cDNA project: the Mammalian Gene Collection (MGC).</title>
        <authorList>
            <consortium name="The MGC Project Team"/>
        </authorList>
    </citation>
    <scope>NUCLEOTIDE SEQUENCE [LARGE SCALE MRNA] (ISOFORMS 1 AND 2)</scope>
    <source>
        <tissue>Bone marrow</tissue>
        <tissue>Kidney</tissue>
    </source>
</reference>
<reference key="6">
    <citation type="journal article" date="1998" name="J. Biol. Chem.">
        <title>A new human selenium-containing protein. Purification, characterization, and cDNA sequence.</title>
        <authorList>
            <person name="Gladyshev V.N."/>
            <person name="Jeang K.-T."/>
            <person name="Wootton J.C."/>
            <person name="Hatfield D.L."/>
        </authorList>
    </citation>
    <scope>NUCLEOTIDE SEQUENCE [MRNA] OF 3-165 (ISOFORM 1)</scope>
    <scope>PROTEIN SEQUENCE OF 101-109; 126-130 AND 149-161</scope>
    <scope>TISSUE SPECIFICITY</scope>
    <scope>MASS SPECTROMETRY</scope>
</reference>
<reference key="7">
    <citation type="journal article" date="2001" name="J. Biol. Chem.">
        <title>Association between the 15-kDa selenoprotein and UDP-glucose:glycoprotein glucosyltransferase in the endoplasmic reticulum of mammalian cells.</title>
        <authorList>
            <person name="Korotkov K.V."/>
            <person name="Kumaraswamy E."/>
            <person name="Zhou Y."/>
            <person name="Hatfield D.L."/>
            <person name="Gladyshev V.N."/>
        </authorList>
    </citation>
    <scope>SUBCELLULAR LOCATION</scope>
</reference>
<reference key="8">
    <citation type="journal article" date="2011" name="BMC Syst. Biol.">
        <title>Initial characterization of the human central proteome.</title>
        <authorList>
            <person name="Burkard T.R."/>
            <person name="Planyavsky M."/>
            <person name="Kaupe I."/>
            <person name="Breitwieser F.P."/>
            <person name="Buerckstuemmer T."/>
            <person name="Bennett K.L."/>
            <person name="Superti-Furga G."/>
            <person name="Colinge J."/>
        </authorList>
    </citation>
    <scope>IDENTIFICATION BY MASS SPECTROMETRY [LARGE SCALE ANALYSIS]</scope>
</reference>
<reference key="9">
    <citation type="journal article" date="2015" name="Proteomics">
        <title>N-terminome analysis of the human mitochondrial proteome.</title>
        <authorList>
            <person name="Vaca Jacome A.S."/>
            <person name="Rabilloud T."/>
            <person name="Schaeffer-Reiss C."/>
            <person name="Rompais M."/>
            <person name="Ayoub D."/>
            <person name="Lane L."/>
            <person name="Bairoch A."/>
            <person name="Van Dorsselaer A."/>
            <person name="Carapito C."/>
        </authorList>
    </citation>
    <scope>IDENTIFICATION BY MASS SPECTROMETRY [LARGE SCALE ANALYSIS]</scope>
</reference>
<reference key="10">
    <citation type="journal article" date="2016" name="J. Biol. Chem.">
        <title>Selenoprotein gene nomenclature.</title>
        <authorList>
            <person name="Gladyshev V.N."/>
            <person name="Arner E.S."/>
            <person name="Berry M.J."/>
            <person name="Brigelius-Flohe R."/>
            <person name="Bruford E.A."/>
            <person name="Burk R.F."/>
            <person name="Carlson B.A."/>
            <person name="Castellano S."/>
            <person name="Chavatte L."/>
            <person name="Conrad M."/>
            <person name="Copeland P.R."/>
            <person name="Diamond A.M."/>
            <person name="Driscoll D.M."/>
            <person name="Ferreiro A."/>
            <person name="Flohe L."/>
            <person name="Green F.R."/>
            <person name="Guigo R."/>
            <person name="Handy D.E."/>
            <person name="Hatfield D.L."/>
            <person name="Hesketh J."/>
            <person name="Hoffmann P.R."/>
            <person name="Holmgren A."/>
            <person name="Hondal R.J."/>
            <person name="Howard M.T."/>
            <person name="Huang K."/>
            <person name="Kim H.Y."/>
            <person name="Kim I.Y."/>
            <person name="Koehrle J."/>
            <person name="Krol A."/>
            <person name="Kryukov G.V."/>
            <person name="Lee B.J."/>
            <person name="Lee B.C."/>
            <person name="Lei X.G."/>
            <person name="Liu Q."/>
            <person name="Lescure A."/>
            <person name="Lobanov A.V."/>
            <person name="Loscalzo J."/>
            <person name="Maiorino M."/>
            <person name="Mariotti M."/>
            <person name="Sandeep Prabhu K."/>
            <person name="Rayman M.P."/>
            <person name="Rozovsky S."/>
            <person name="Salinas G."/>
            <person name="Schmidt E.E."/>
            <person name="Schomburg L."/>
            <person name="Schweizer U."/>
            <person name="Simonovic M."/>
            <person name="Sunde R.A."/>
            <person name="Tsuji P.A."/>
            <person name="Tweedie S."/>
            <person name="Ursini F."/>
            <person name="Whanger P.D."/>
            <person name="Zhang Y."/>
        </authorList>
    </citation>
    <scope>NOMENCLATURE</scope>
</reference>
<reference key="11">
    <citation type="journal article" date="2014" name="Glycobiology">
        <title>Both isoforms of human UDP-glucose:glycoprotein glucosyltransferase are enzymatically active.</title>
        <authorList>
            <person name="Takeda Y."/>
            <person name="Seko A."/>
            <person name="Hachisu M."/>
            <person name="Daikoku S."/>
            <person name="Izumi M."/>
            <person name="Koizumi A."/>
            <person name="Fujikawa K."/>
            <person name="Kajihara Y."/>
            <person name="Ito Y."/>
        </authorList>
    </citation>
    <scope>FUNCTION</scope>
    <scope>INTERACTION WITH UGGT1 AND UGGT2</scope>
    <scope>MUTAGENESIS OF SEC-96</scope>
</reference>
<reference key="12">
    <citation type="journal article" date="2018" name="Nutr. Metab.">
        <title>The interaction of selenoprotein F (SELENOF) with retinol dehydrogenase 11 (RDH11) implied a role of SELENOF in vitamin A metabolism.</title>
        <authorList>
            <person name="Tian J."/>
            <person name="Liu J."/>
            <person name="Li J."/>
            <person name="Zheng J."/>
            <person name="Chen L."/>
            <person name="Wang Y."/>
            <person name="Liu Q."/>
            <person name="Ni J."/>
        </authorList>
    </citation>
    <scope>INTERACTION WITH RDH11</scope>
</reference>
<gene>
    <name evidence="9 12" type="primary">SELENOF</name>
    <name evidence="7" type="synonym">SEP15</name>
</gene>
<proteinExistence type="evidence at protein level"/>
<organism>
    <name type="scientific">Homo sapiens</name>
    <name type="common">Human</name>
    <dbReference type="NCBI Taxonomy" id="9606"/>
    <lineage>
        <taxon>Eukaryota</taxon>
        <taxon>Metazoa</taxon>
        <taxon>Chordata</taxon>
        <taxon>Craniata</taxon>
        <taxon>Vertebrata</taxon>
        <taxon>Euteleostomi</taxon>
        <taxon>Mammalia</taxon>
        <taxon>Eutheria</taxon>
        <taxon>Euarchontoglires</taxon>
        <taxon>Primates</taxon>
        <taxon>Haplorrhini</taxon>
        <taxon>Catarrhini</taxon>
        <taxon>Hominidae</taxon>
        <taxon>Homo</taxon>
    </lineage>
</organism>
<sequence length="165" mass="18092">MVAMAAGPSGCLVPAFGLRLLLATVLQAVSAFGAEFSSEACRELGFSSNLLCSSCDLLGQFNLLQLDPDCRGCCQEEAQFETKKLYAGAILEVCGUKLGRFPQVQAFVRSDKPKLFRGLQIKYVRGSDPVLKLLDDNGNIAEELSILKWNTDSVEEFLSEKLERI</sequence>